<accession>A6UZJ4</accession>
<proteinExistence type="inferred from homology"/>
<reference key="1">
    <citation type="submission" date="2007-06" db="EMBL/GenBank/DDBJ databases">
        <authorList>
            <person name="Dodson R.J."/>
            <person name="Harkins D."/>
            <person name="Paulsen I.T."/>
        </authorList>
    </citation>
    <scope>NUCLEOTIDE SEQUENCE [LARGE SCALE GENOMIC DNA]</scope>
    <source>
        <strain>DSM 24068 / PA7</strain>
    </source>
</reference>
<feature type="chain" id="PRO_0000323301" description="Small ribosomal subunit protein uS3">
    <location>
        <begin position="1"/>
        <end position="228"/>
    </location>
</feature>
<feature type="domain" description="KH type-2" evidence="1">
    <location>
        <begin position="39"/>
        <end position="107"/>
    </location>
</feature>
<evidence type="ECO:0000255" key="1">
    <source>
        <dbReference type="HAMAP-Rule" id="MF_01309"/>
    </source>
</evidence>
<evidence type="ECO:0000305" key="2"/>
<sequence>MGQKVHPNGIRLGIVKEHTSVWYADRKNYADYLFADLKVREYLQDKLKSASVSRIDIHRPAQTARITIHTARPGIVIGKKGEDVEKLRQDLTKQMGVPVHINIEEIRKPELDAMLVAQSVAQQLERRVMFRRAMKRAVQNAMRIGAKGIKIQVSGRLGGAEIARTEWYREGRVPLHTLRADIDYATYEAHTTYGVIGVKVWIFKGEVIGGRQEELKPVAPAPRKKAAR</sequence>
<organism>
    <name type="scientific">Pseudomonas paraeruginosa (strain DSM 24068 / PA7)</name>
    <name type="common">Pseudomonas aeruginosa (strain PA7)</name>
    <dbReference type="NCBI Taxonomy" id="381754"/>
    <lineage>
        <taxon>Bacteria</taxon>
        <taxon>Pseudomonadati</taxon>
        <taxon>Pseudomonadota</taxon>
        <taxon>Gammaproteobacteria</taxon>
        <taxon>Pseudomonadales</taxon>
        <taxon>Pseudomonadaceae</taxon>
        <taxon>Pseudomonas</taxon>
        <taxon>Pseudomonas paraeruginosa</taxon>
    </lineage>
</organism>
<protein>
    <recommendedName>
        <fullName evidence="1">Small ribosomal subunit protein uS3</fullName>
    </recommendedName>
    <alternativeName>
        <fullName evidence="2">30S ribosomal protein S3</fullName>
    </alternativeName>
</protein>
<name>RS3_PSEP7</name>
<comment type="function">
    <text evidence="1">Binds the lower part of the 30S subunit head. Binds mRNA in the 70S ribosome, positioning it for translation.</text>
</comment>
<comment type="subunit">
    <text evidence="1">Part of the 30S ribosomal subunit. Forms a tight complex with proteins S10 and S14.</text>
</comment>
<comment type="similarity">
    <text evidence="1">Belongs to the universal ribosomal protein uS3 family.</text>
</comment>
<gene>
    <name evidence="1" type="primary">rpsC</name>
    <name type="ordered locus">PSPA7_0843</name>
</gene>
<dbReference type="EMBL" id="CP000744">
    <property type="protein sequence ID" value="ABR84790.1"/>
    <property type="molecule type" value="Genomic_DNA"/>
</dbReference>
<dbReference type="RefSeq" id="WP_003093727.1">
    <property type="nucleotide sequence ID" value="NC_009656.1"/>
</dbReference>
<dbReference type="SMR" id="A6UZJ4"/>
<dbReference type="GeneID" id="77219204"/>
<dbReference type="KEGG" id="pap:PSPA7_0843"/>
<dbReference type="HOGENOM" id="CLU_058591_0_2_6"/>
<dbReference type="Proteomes" id="UP000001582">
    <property type="component" value="Chromosome"/>
</dbReference>
<dbReference type="GO" id="GO:0022627">
    <property type="term" value="C:cytosolic small ribosomal subunit"/>
    <property type="evidence" value="ECO:0007669"/>
    <property type="project" value="TreeGrafter"/>
</dbReference>
<dbReference type="GO" id="GO:0003729">
    <property type="term" value="F:mRNA binding"/>
    <property type="evidence" value="ECO:0007669"/>
    <property type="project" value="UniProtKB-UniRule"/>
</dbReference>
<dbReference type="GO" id="GO:0019843">
    <property type="term" value="F:rRNA binding"/>
    <property type="evidence" value="ECO:0007669"/>
    <property type="project" value="UniProtKB-UniRule"/>
</dbReference>
<dbReference type="GO" id="GO:0003735">
    <property type="term" value="F:structural constituent of ribosome"/>
    <property type="evidence" value="ECO:0007669"/>
    <property type="project" value="InterPro"/>
</dbReference>
<dbReference type="GO" id="GO:0006412">
    <property type="term" value="P:translation"/>
    <property type="evidence" value="ECO:0007669"/>
    <property type="project" value="UniProtKB-UniRule"/>
</dbReference>
<dbReference type="CDD" id="cd02412">
    <property type="entry name" value="KH-II_30S_S3"/>
    <property type="match status" value="1"/>
</dbReference>
<dbReference type="FunFam" id="3.30.1140.32:FF:000001">
    <property type="entry name" value="30S ribosomal protein S3"/>
    <property type="match status" value="1"/>
</dbReference>
<dbReference type="FunFam" id="3.30.300.20:FF:000001">
    <property type="entry name" value="30S ribosomal protein S3"/>
    <property type="match status" value="1"/>
</dbReference>
<dbReference type="Gene3D" id="3.30.300.20">
    <property type="match status" value="1"/>
</dbReference>
<dbReference type="Gene3D" id="3.30.1140.32">
    <property type="entry name" value="Ribosomal protein S3, C-terminal domain"/>
    <property type="match status" value="1"/>
</dbReference>
<dbReference type="HAMAP" id="MF_01309_B">
    <property type="entry name" value="Ribosomal_uS3_B"/>
    <property type="match status" value="1"/>
</dbReference>
<dbReference type="InterPro" id="IPR004087">
    <property type="entry name" value="KH_dom"/>
</dbReference>
<dbReference type="InterPro" id="IPR015946">
    <property type="entry name" value="KH_dom-like_a/b"/>
</dbReference>
<dbReference type="InterPro" id="IPR004044">
    <property type="entry name" value="KH_dom_type_2"/>
</dbReference>
<dbReference type="InterPro" id="IPR009019">
    <property type="entry name" value="KH_sf_prok-type"/>
</dbReference>
<dbReference type="InterPro" id="IPR036419">
    <property type="entry name" value="Ribosomal_S3_C_sf"/>
</dbReference>
<dbReference type="InterPro" id="IPR005704">
    <property type="entry name" value="Ribosomal_uS3_bac-typ"/>
</dbReference>
<dbReference type="InterPro" id="IPR001351">
    <property type="entry name" value="Ribosomal_uS3_C"/>
</dbReference>
<dbReference type="InterPro" id="IPR018280">
    <property type="entry name" value="Ribosomal_uS3_CS"/>
</dbReference>
<dbReference type="NCBIfam" id="TIGR01009">
    <property type="entry name" value="rpsC_bact"/>
    <property type="match status" value="1"/>
</dbReference>
<dbReference type="PANTHER" id="PTHR11760">
    <property type="entry name" value="30S/40S RIBOSOMAL PROTEIN S3"/>
    <property type="match status" value="1"/>
</dbReference>
<dbReference type="PANTHER" id="PTHR11760:SF19">
    <property type="entry name" value="SMALL RIBOSOMAL SUBUNIT PROTEIN US3C"/>
    <property type="match status" value="1"/>
</dbReference>
<dbReference type="Pfam" id="PF07650">
    <property type="entry name" value="KH_2"/>
    <property type="match status" value="1"/>
</dbReference>
<dbReference type="Pfam" id="PF00189">
    <property type="entry name" value="Ribosomal_S3_C"/>
    <property type="match status" value="1"/>
</dbReference>
<dbReference type="SMART" id="SM00322">
    <property type="entry name" value="KH"/>
    <property type="match status" value="1"/>
</dbReference>
<dbReference type="SUPFAM" id="SSF54814">
    <property type="entry name" value="Prokaryotic type KH domain (KH-domain type II)"/>
    <property type="match status" value="1"/>
</dbReference>
<dbReference type="SUPFAM" id="SSF54821">
    <property type="entry name" value="Ribosomal protein S3 C-terminal domain"/>
    <property type="match status" value="1"/>
</dbReference>
<dbReference type="PROSITE" id="PS50823">
    <property type="entry name" value="KH_TYPE_2"/>
    <property type="match status" value="1"/>
</dbReference>
<dbReference type="PROSITE" id="PS00548">
    <property type="entry name" value="RIBOSOMAL_S3"/>
    <property type="match status" value="1"/>
</dbReference>
<keyword id="KW-0687">Ribonucleoprotein</keyword>
<keyword id="KW-0689">Ribosomal protein</keyword>
<keyword id="KW-0694">RNA-binding</keyword>
<keyword id="KW-0699">rRNA-binding</keyword>